<proteinExistence type="evidence at protein level"/>
<accession>P82389</accession>
<accession>Q5K0E6</accession>
<feature type="signal peptide" evidence="3">
    <location>
        <begin position="1"/>
        <end position="22"/>
    </location>
</feature>
<feature type="propeptide" id="PRO_0000450287" evidence="11">
    <location>
        <begin position="23"/>
        <end position="49"/>
    </location>
</feature>
<feature type="peptide" id="PRO_0000010147" description="Aurein-2.2" evidence="5 7">
    <location>
        <begin position="50"/>
        <end position="65"/>
    </location>
</feature>
<feature type="peptide" id="PRO_0000010148" description="Aurein-2.2.1" evidence="5">
    <location>
        <begin position="52"/>
        <end position="65"/>
    </location>
</feature>
<feature type="propeptide" id="PRO_0000450288" evidence="11">
    <location>
        <begin position="69"/>
        <end position="72"/>
    </location>
</feature>
<feature type="region of interest" description="Disordered" evidence="4">
    <location>
        <begin position="27"/>
        <end position="47"/>
    </location>
</feature>
<feature type="compositionally biased region" description="Basic and acidic residues" evidence="4">
    <location>
        <begin position="38"/>
        <end position="47"/>
    </location>
</feature>
<feature type="modified residue" description="Leucine amide" evidence="5">
    <location>
        <position position="65"/>
    </location>
</feature>
<reference key="1">
    <citation type="journal article" date="2005" name="Regul. Pept.">
        <title>The structural organization of aurein precursor cDNAs from the skin secretion of the Australian green and golden bell frog, Litoria aurea.</title>
        <authorList>
            <person name="Chen T."/>
            <person name="Xue Y."/>
            <person name="Zhou M."/>
            <person name="Shaw C."/>
        </authorList>
    </citation>
    <scope>NUCLEOTIDE SEQUENCE [MRNA]</scope>
    <scope>PROTEIN SEQUENCE OF 50-65</scope>
    <scope>MASS SPECTROMETRY</scope>
    <scope>SUBCELLULAR LOCATION</scope>
    <source>
        <tissue>Skin</tissue>
    </source>
</reference>
<reference key="2">
    <citation type="journal article" date="2000" name="Eur. J. Biochem.">
        <title>The antibiotic and anticancer active aurein peptides from the australian bell frogs Litoria aurea and Litoria raniformis the solution structure of aurein 1.2.</title>
        <authorList>
            <person name="Rozek T."/>
            <person name="Wegener K.L."/>
            <person name="Bowie J.H."/>
            <person name="Olver I.N."/>
            <person name="Carver J.A."/>
            <person name="Wallace J.C."/>
            <person name="Tyler M.J."/>
        </authorList>
    </citation>
    <scope>PROTEIN SEQUENCE OF 50-65</scope>
    <scope>FUNCTION</scope>
    <scope>AMIDATION AT LEU-65</scope>
    <scope>SUBCELLULAR LOCATION</scope>
    <source>
        <tissue>Skin secretion</tissue>
    </source>
</reference>
<reference key="3">
    <citation type="journal article" date="2002" name="Eur. J. Biochem.">
        <title>Amphibian peptides that inhibit neuronal nitric oxide synthase. Isolation of lesuerin from the skin secretion of the Australian stony creek frog Litoria lesueuri.</title>
        <authorList>
            <person name="Doyle J."/>
            <person name="Llewellyn L.E."/>
            <person name="Brinkworth C.S."/>
            <person name="Bowie J.H."/>
            <person name="Wegener K.L."/>
            <person name="Rozek T."/>
            <person name="Wabnitz P.A."/>
            <person name="Wallace J.C."/>
            <person name="Tyler M.J."/>
        </authorList>
    </citation>
    <scope>FUNCTION</scope>
</reference>
<reference key="4">
    <citation type="journal article" date="2007" name="Biophys. J.">
        <title>Characterization of the structure and membrane interaction of the antimicrobial peptides aurein 2.2 and 2.3 from Australian southern bell frogs.</title>
        <authorList>
            <person name="Pan Y.L."/>
            <person name="Cheng J.T."/>
            <person name="Hale J."/>
            <person name="Pan J."/>
            <person name="Hancock R.E."/>
            <person name="Straus S.K."/>
        </authorList>
    </citation>
    <scope>FUNCTION</scope>
    <scope>SUBCELLULAR LOCATION</scope>
</reference>
<evidence type="ECO:0000250" key="1">
    <source>
        <dbReference type="UniProtKB" id="P81835"/>
    </source>
</evidence>
<evidence type="ECO:0000250" key="2">
    <source>
        <dbReference type="UniProtKB" id="P82390"/>
    </source>
</evidence>
<evidence type="ECO:0000255" key="3"/>
<evidence type="ECO:0000256" key="4">
    <source>
        <dbReference type="SAM" id="MobiDB-lite"/>
    </source>
</evidence>
<evidence type="ECO:0000269" key="5">
    <source>
    </source>
</evidence>
<evidence type="ECO:0000269" key="6">
    <source>
    </source>
</evidence>
<evidence type="ECO:0000269" key="7">
    <source>
    </source>
</evidence>
<evidence type="ECO:0000269" key="8">
    <source>
    </source>
</evidence>
<evidence type="ECO:0000303" key="9">
    <source>
    </source>
</evidence>
<evidence type="ECO:0000305" key="10"/>
<evidence type="ECO:0000305" key="11">
    <source>
    </source>
</evidence>
<evidence type="ECO:0000305" key="12">
    <source>
    </source>
</evidence>
<dbReference type="EMBL" id="AJ850127">
    <property type="protein sequence ID" value="CAH61711.1"/>
    <property type="molecule type" value="mRNA"/>
</dbReference>
<dbReference type="GO" id="GO:0005576">
    <property type="term" value="C:extracellular region"/>
    <property type="evidence" value="ECO:0007669"/>
    <property type="project" value="UniProtKB-SubCell"/>
</dbReference>
<dbReference type="GO" id="GO:0016020">
    <property type="term" value="C:membrane"/>
    <property type="evidence" value="ECO:0007669"/>
    <property type="project" value="UniProtKB-KW"/>
</dbReference>
<dbReference type="GO" id="GO:0044218">
    <property type="term" value="C:other organism cell membrane"/>
    <property type="evidence" value="ECO:0007669"/>
    <property type="project" value="UniProtKB-KW"/>
</dbReference>
<dbReference type="GO" id="GO:0042742">
    <property type="term" value="P:defense response to bacterium"/>
    <property type="evidence" value="ECO:0007669"/>
    <property type="project" value="UniProtKB-KW"/>
</dbReference>
<dbReference type="GO" id="GO:0045087">
    <property type="term" value="P:innate immune response"/>
    <property type="evidence" value="ECO:0007669"/>
    <property type="project" value="UniProtKB-KW"/>
</dbReference>
<dbReference type="InterPro" id="IPR004275">
    <property type="entry name" value="Frog_antimicrobial_propeptide"/>
</dbReference>
<dbReference type="InterPro" id="IPR016322">
    <property type="entry name" value="FSAP"/>
</dbReference>
<dbReference type="Pfam" id="PF03032">
    <property type="entry name" value="FSAP_sig_propep"/>
    <property type="match status" value="1"/>
</dbReference>
<dbReference type="PIRSF" id="PIRSF001822">
    <property type="entry name" value="Dermaseptin_precursor"/>
    <property type="match status" value="1"/>
</dbReference>
<keyword id="KW-0027">Amidation</keyword>
<keyword id="KW-0878">Amphibian defense peptide</keyword>
<keyword id="KW-0044">Antibiotic</keyword>
<keyword id="KW-0929">Antimicrobial</keyword>
<keyword id="KW-0165">Cleavage on pair of basic residues</keyword>
<keyword id="KW-0903">Direct protein sequencing</keyword>
<keyword id="KW-0391">Immunity</keyword>
<keyword id="KW-0399">Innate immunity</keyword>
<keyword id="KW-0472">Membrane</keyword>
<keyword id="KW-0964">Secreted</keyword>
<keyword id="KW-0732">Signal</keyword>
<keyword id="KW-1052">Target cell membrane</keyword>
<keyword id="KW-1053">Target membrane</keyword>
<sequence length="72" mass="8095">MAFLKKSLFLVLFLGLVSLSICEKEKRQNEEDEDENEAANHEEGSEEKRGLFDIVKKVVGALGSLGKRNDLE</sequence>
<comment type="function">
    <text evidence="1 5 6 8">Amphipathic alpha-helical antimicrobial peptide with weak to moderate activity against Gram-positive bacteria, and no activity against Gram-negative bacteria (PubMed:10951191, PubMed:17259271). Probably acts by disturbing membrane functions with its amphipathic structure (PubMed:10951191). Strongly inhibits the formation of NO by neuronal nitric oxide synthase (nNOS) at micromolar concentrations (PubMed:11784303). Acts by a non-competitive mechanism, probably by binding to calcium/calmodulin and as a consequence blocking calmodulin attachment to nNOS (By similarity).</text>
</comment>
<comment type="subcellular location">
    <subcellularLocation>
        <location evidence="5 7">Secreted</location>
    </subcellularLocation>
    <subcellularLocation>
        <location evidence="8">Target cell membrane</location>
    </subcellularLocation>
</comment>
<comment type="tissue specificity">
    <text evidence="11 12">Expressed by the skin dorsal glands.</text>
</comment>
<comment type="PTM">
    <text evidence="2">Amidation is essential for antibacterial activity against Gram-positive bacteria.</text>
</comment>
<comment type="mass spectrometry" mass="1615.76" method="MALDI" evidence="7"/>
<comment type="similarity">
    <text evidence="10">Belongs to the frog skin active peptide (FSAP) family. Aurein subfamily.</text>
</comment>
<comment type="online information" name="The antimicrobial peptide database">
    <link uri="https://wangapd3.com/database/query_output.php?ID=00015"/>
</comment>
<organism>
    <name type="scientific">Ranoidea aurea</name>
    <name type="common">Green and golden bell frog</name>
    <name type="synonym">Litoria aurea</name>
    <dbReference type="NCBI Taxonomy" id="8371"/>
    <lineage>
        <taxon>Eukaryota</taxon>
        <taxon>Metazoa</taxon>
        <taxon>Chordata</taxon>
        <taxon>Craniata</taxon>
        <taxon>Vertebrata</taxon>
        <taxon>Euteleostomi</taxon>
        <taxon>Amphibia</taxon>
        <taxon>Batrachia</taxon>
        <taxon>Anura</taxon>
        <taxon>Neobatrachia</taxon>
        <taxon>Hyloidea</taxon>
        <taxon>Hylidae</taxon>
        <taxon>Pelodryadinae</taxon>
        <taxon>Ranoidea</taxon>
    </lineage>
</organism>
<protein>
    <recommendedName>
        <fullName evidence="9">Aurein-2.2</fullName>
    </recommendedName>
    <component>
        <recommendedName>
            <fullName evidence="9">Aurein-2.2.1</fullName>
        </recommendedName>
    </component>
</protein>
<name>AUR22_RANAE</name>